<sequence length="491" mass="54737">MAQSGGEARPGPKTAVQIRVAIQEAEDVDELEDEEEGAETRGAGDPARYLSPGWGSASEEEPSRGHSGTTASGGENEREDLEQEWKPPDEELIKKLVDQIEFYFSDENLEKDAFLLKHVRRNKLGYVSVKLLTSFKKVKHLTRDWRTTAHALKYSVVLELNEDHRKVRRTTPVPLFPNENLPSKMLLVYDLYLSPKLWALATPQKNGRVQEKVMEHLLKLFGTFGVISSVRILKPGRELPPDIRRISSRYSQVGTQECAIVEFEEVEAAIKAHEFMITESQGKENMKAVLIGMKPPKKKPAKDKNHDEEPTASIHLNKSLNKRVEELQYMGDESSANSSSDPESNPTSPMAGRRHAATNKLSPSGHQNLFLSPNASPCTSPWSSPLAQRKGVSRKSPLAEEGRLNCSTSPEIFRKCMDYSSDSSVTPSGSPWVRRRRQAEMGTQEKSPGTSPLLSRKMQTADGLPVGVLRLPRGPDNTRGFHGHERSRACV</sequence>
<name>LARP6_HUMAN</name>
<reference key="1">
    <citation type="journal article" date="2007" name="Gene">
        <title>Acheron, a novel member of the Lupus antigen family, is induced during the programmed cell death of skeletal muscles in the moth Manduca sexta.</title>
        <authorList>
            <person name="Valavanis C."/>
            <person name="Wang Z."/>
            <person name="Sun D."/>
            <person name="Vaine M."/>
            <person name="Schwartz L.M."/>
        </authorList>
    </citation>
    <scope>NUCLEOTIDE SEQUENCE [MRNA] (ISOFORM 1)</scope>
    <scope>SUBCELLULAR LOCATION</scope>
    <scope>TISSUE SPECIFICITY</scope>
    <source>
        <tissue>Hippocampus</tissue>
        <tissue>Rhabdomyosarcoma</tissue>
    </source>
</reference>
<reference key="2">
    <citation type="journal article" date="2004" name="Nat. Genet.">
        <title>Complete sequencing and characterization of 21,243 full-length human cDNAs.</title>
        <authorList>
            <person name="Ota T."/>
            <person name="Suzuki Y."/>
            <person name="Nishikawa T."/>
            <person name="Otsuki T."/>
            <person name="Sugiyama T."/>
            <person name="Irie R."/>
            <person name="Wakamatsu A."/>
            <person name="Hayashi K."/>
            <person name="Sato H."/>
            <person name="Nagai K."/>
            <person name="Kimura K."/>
            <person name="Makita H."/>
            <person name="Sekine M."/>
            <person name="Obayashi M."/>
            <person name="Nishi T."/>
            <person name="Shibahara T."/>
            <person name="Tanaka T."/>
            <person name="Ishii S."/>
            <person name="Yamamoto J."/>
            <person name="Saito K."/>
            <person name="Kawai Y."/>
            <person name="Isono Y."/>
            <person name="Nakamura Y."/>
            <person name="Nagahari K."/>
            <person name="Murakami K."/>
            <person name="Yasuda T."/>
            <person name="Iwayanagi T."/>
            <person name="Wagatsuma M."/>
            <person name="Shiratori A."/>
            <person name="Sudo H."/>
            <person name="Hosoiri T."/>
            <person name="Kaku Y."/>
            <person name="Kodaira H."/>
            <person name="Kondo H."/>
            <person name="Sugawara M."/>
            <person name="Takahashi M."/>
            <person name="Kanda K."/>
            <person name="Yokoi T."/>
            <person name="Furuya T."/>
            <person name="Kikkawa E."/>
            <person name="Omura Y."/>
            <person name="Abe K."/>
            <person name="Kamihara K."/>
            <person name="Katsuta N."/>
            <person name="Sato K."/>
            <person name="Tanikawa M."/>
            <person name="Yamazaki M."/>
            <person name="Ninomiya K."/>
            <person name="Ishibashi T."/>
            <person name="Yamashita H."/>
            <person name="Murakawa K."/>
            <person name="Fujimori K."/>
            <person name="Tanai H."/>
            <person name="Kimata M."/>
            <person name="Watanabe M."/>
            <person name="Hiraoka S."/>
            <person name="Chiba Y."/>
            <person name="Ishida S."/>
            <person name="Ono Y."/>
            <person name="Takiguchi S."/>
            <person name="Watanabe S."/>
            <person name="Yosida M."/>
            <person name="Hotuta T."/>
            <person name="Kusano J."/>
            <person name="Kanehori K."/>
            <person name="Takahashi-Fujii A."/>
            <person name="Hara H."/>
            <person name="Tanase T.-O."/>
            <person name="Nomura Y."/>
            <person name="Togiya S."/>
            <person name="Komai F."/>
            <person name="Hara R."/>
            <person name="Takeuchi K."/>
            <person name="Arita M."/>
            <person name="Imose N."/>
            <person name="Musashino K."/>
            <person name="Yuuki H."/>
            <person name="Oshima A."/>
            <person name="Sasaki N."/>
            <person name="Aotsuka S."/>
            <person name="Yoshikawa Y."/>
            <person name="Matsunawa H."/>
            <person name="Ichihara T."/>
            <person name="Shiohata N."/>
            <person name="Sano S."/>
            <person name="Moriya S."/>
            <person name="Momiyama H."/>
            <person name="Satoh N."/>
            <person name="Takami S."/>
            <person name="Terashima Y."/>
            <person name="Suzuki O."/>
            <person name="Nakagawa S."/>
            <person name="Senoh A."/>
            <person name="Mizoguchi H."/>
            <person name="Goto Y."/>
            <person name="Shimizu F."/>
            <person name="Wakebe H."/>
            <person name="Hishigaki H."/>
            <person name="Watanabe T."/>
            <person name="Sugiyama A."/>
            <person name="Takemoto M."/>
            <person name="Kawakami B."/>
            <person name="Yamazaki M."/>
            <person name="Watanabe K."/>
            <person name="Kumagai A."/>
            <person name="Itakura S."/>
            <person name="Fukuzumi Y."/>
            <person name="Fujimori Y."/>
            <person name="Komiyama M."/>
            <person name="Tashiro H."/>
            <person name="Tanigami A."/>
            <person name="Fujiwara T."/>
            <person name="Ono T."/>
            <person name="Yamada K."/>
            <person name="Fujii Y."/>
            <person name="Ozaki K."/>
            <person name="Hirao M."/>
            <person name="Ohmori Y."/>
            <person name="Kawabata A."/>
            <person name="Hikiji T."/>
            <person name="Kobatake N."/>
            <person name="Inagaki H."/>
            <person name="Ikema Y."/>
            <person name="Okamoto S."/>
            <person name="Okitani R."/>
            <person name="Kawakami T."/>
            <person name="Noguchi S."/>
            <person name="Itoh T."/>
            <person name="Shigeta K."/>
            <person name="Senba T."/>
            <person name="Matsumura K."/>
            <person name="Nakajima Y."/>
            <person name="Mizuno T."/>
            <person name="Morinaga M."/>
            <person name="Sasaki M."/>
            <person name="Togashi T."/>
            <person name="Oyama M."/>
            <person name="Hata H."/>
            <person name="Watanabe M."/>
            <person name="Komatsu T."/>
            <person name="Mizushima-Sugano J."/>
            <person name="Satoh T."/>
            <person name="Shirai Y."/>
            <person name="Takahashi Y."/>
            <person name="Nakagawa K."/>
            <person name="Okumura K."/>
            <person name="Nagase T."/>
            <person name="Nomura N."/>
            <person name="Kikuchi H."/>
            <person name="Masuho Y."/>
            <person name="Yamashita R."/>
            <person name="Nakai K."/>
            <person name="Yada T."/>
            <person name="Nakamura Y."/>
            <person name="Ohara O."/>
            <person name="Isogai T."/>
            <person name="Sugano S."/>
        </authorList>
    </citation>
    <scope>NUCLEOTIDE SEQUENCE [LARGE SCALE MRNA] (ISOFORM 1)</scope>
    <source>
        <tissue>Placenta</tissue>
    </source>
</reference>
<reference key="3">
    <citation type="journal article" date="2007" name="BMC Genomics">
        <title>The full-ORF clone resource of the German cDNA consortium.</title>
        <authorList>
            <person name="Bechtel S."/>
            <person name="Rosenfelder H."/>
            <person name="Duda A."/>
            <person name="Schmidt C.P."/>
            <person name="Ernst U."/>
            <person name="Wellenreuther R."/>
            <person name="Mehrle A."/>
            <person name="Schuster C."/>
            <person name="Bahr A."/>
            <person name="Bloecker H."/>
            <person name="Heubner D."/>
            <person name="Hoerlein A."/>
            <person name="Michel G."/>
            <person name="Wedler H."/>
            <person name="Koehrer K."/>
            <person name="Ottenwaelder B."/>
            <person name="Poustka A."/>
            <person name="Wiemann S."/>
            <person name="Schupp I."/>
        </authorList>
    </citation>
    <scope>NUCLEOTIDE SEQUENCE [LARGE SCALE MRNA] (ISOFORM 1)</scope>
    <source>
        <tissue>Melanoma</tissue>
    </source>
</reference>
<reference key="4">
    <citation type="journal article" date="2006" name="Nature">
        <title>Analysis of the DNA sequence and duplication history of human chromosome 15.</title>
        <authorList>
            <person name="Zody M.C."/>
            <person name="Garber M."/>
            <person name="Sharpe T."/>
            <person name="Young S.K."/>
            <person name="Rowen L."/>
            <person name="O'Neill K."/>
            <person name="Whittaker C.A."/>
            <person name="Kamal M."/>
            <person name="Chang J.L."/>
            <person name="Cuomo C.A."/>
            <person name="Dewar K."/>
            <person name="FitzGerald M.G."/>
            <person name="Kodira C.D."/>
            <person name="Madan A."/>
            <person name="Qin S."/>
            <person name="Yang X."/>
            <person name="Abbasi N."/>
            <person name="Abouelleil A."/>
            <person name="Arachchi H.M."/>
            <person name="Baradarani L."/>
            <person name="Birditt B."/>
            <person name="Bloom S."/>
            <person name="Bloom T."/>
            <person name="Borowsky M.L."/>
            <person name="Burke J."/>
            <person name="Butler J."/>
            <person name="Cook A."/>
            <person name="DeArellano K."/>
            <person name="DeCaprio D."/>
            <person name="Dorris L. III"/>
            <person name="Dors M."/>
            <person name="Eichler E.E."/>
            <person name="Engels R."/>
            <person name="Fahey J."/>
            <person name="Fleetwood P."/>
            <person name="Friedman C."/>
            <person name="Gearin G."/>
            <person name="Hall J.L."/>
            <person name="Hensley G."/>
            <person name="Johnson E."/>
            <person name="Jones C."/>
            <person name="Kamat A."/>
            <person name="Kaur A."/>
            <person name="Locke D.P."/>
            <person name="Madan A."/>
            <person name="Munson G."/>
            <person name="Jaffe D.B."/>
            <person name="Lui A."/>
            <person name="Macdonald P."/>
            <person name="Mauceli E."/>
            <person name="Naylor J.W."/>
            <person name="Nesbitt R."/>
            <person name="Nicol R."/>
            <person name="O'Leary S.B."/>
            <person name="Ratcliffe A."/>
            <person name="Rounsley S."/>
            <person name="She X."/>
            <person name="Sneddon K.M.B."/>
            <person name="Stewart S."/>
            <person name="Sougnez C."/>
            <person name="Stone S.M."/>
            <person name="Topham K."/>
            <person name="Vincent D."/>
            <person name="Wang S."/>
            <person name="Zimmer A.R."/>
            <person name="Birren B.W."/>
            <person name="Hood L."/>
            <person name="Lander E.S."/>
            <person name="Nusbaum C."/>
        </authorList>
    </citation>
    <scope>NUCLEOTIDE SEQUENCE [LARGE SCALE GENOMIC DNA]</scope>
</reference>
<reference key="5">
    <citation type="journal article" date="2004" name="Genome Res.">
        <title>The status, quality, and expansion of the NIH full-length cDNA project: the Mammalian Gene Collection (MGC).</title>
        <authorList>
            <consortium name="The MGC Project Team"/>
        </authorList>
    </citation>
    <scope>NUCLEOTIDE SEQUENCE [LARGE SCALE MRNA] (ISOFORMS 1 AND 2)</scope>
    <source>
        <tissue>Adrenal cortex</tissue>
        <tissue>Brain</tissue>
        <tissue>Muscle</tissue>
    </source>
</reference>
<reference key="6">
    <citation type="journal article" date="2009" name="Anal. Chem.">
        <title>Lys-N and trypsin cover complementary parts of the phosphoproteome in a refined SCX-based approach.</title>
        <authorList>
            <person name="Gauci S."/>
            <person name="Helbig A.O."/>
            <person name="Slijper M."/>
            <person name="Krijgsveld J."/>
            <person name="Heck A.J."/>
            <person name="Mohammed S."/>
        </authorList>
    </citation>
    <scope>ACETYLATION [LARGE SCALE ANALYSIS] AT ALA-2</scope>
    <scope>CLEAVAGE OF INITIATOR METHIONINE [LARGE SCALE ANALYSIS]</scope>
    <scope>IDENTIFICATION BY MASS SPECTROMETRY [LARGE SCALE ANALYSIS]</scope>
</reference>
<reference key="7">
    <citation type="journal article" date="2010" name="J. Mol. Biol.">
        <title>Nonmuscle myosin-dependent synthesis of type I collagen.</title>
        <authorList>
            <person name="Cai L."/>
            <person name="Fritz D."/>
            <person name="Stefanovic L."/>
            <person name="Stefanovic B."/>
        </authorList>
    </citation>
    <scope>FUNCTION</scope>
    <scope>INTERACTION WITH MYH10</scope>
</reference>
<reference key="8">
    <citation type="journal article" date="2011" name="Mol. Cell. Biol.">
        <title>A novel role of vimentin filaments: binding and stabilization of collagen mRNAs.</title>
        <authorList>
            <person name="Challa A.A."/>
            <person name="Stefanovic B."/>
        </authorList>
    </citation>
    <scope>FUNCTION</scope>
    <scope>INTERACTION WITH VIM</scope>
</reference>
<reference key="9">
    <citation type="journal article" date="2012" name="RNA">
        <title>A novel role of RNA helicase A in regulation of translation of type I collagen mRNAs.</title>
        <authorList>
            <person name="Manojlovic Z."/>
            <person name="Stefanovic B."/>
        </authorList>
    </citation>
    <scope>FUNCTION</scope>
    <scope>INTERACTION WITH DHX9</scope>
</reference>
<reference key="10">
    <citation type="journal article" date="2013" name="J. Proteome Res.">
        <title>Toward a comprehensive characterization of a human cancer cell phosphoproteome.</title>
        <authorList>
            <person name="Zhou H."/>
            <person name="Di Palma S."/>
            <person name="Preisinger C."/>
            <person name="Peng M."/>
            <person name="Polat A.N."/>
            <person name="Heck A.J."/>
            <person name="Mohammed S."/>
        </authorList>
    </citation>
    <scope>PHOSPHORYLATION [LARGE SCALE ANALYSIS] AT SER-56</scope>
    <scope>IDENTIFICATION BY MASS SPECTROMETRY [LARGE SCALE ANALYSIS]</scope>
    <source>
        <tissue>Cervix carcinoma</tissue>
    </source>
</reference>
<keyword id="KW-0002">3D-structure</keyword>
<keyword id="KW-0007">Acetylation</keyword>
<keyword id="KW-0025">Alternative splicing</keyword>
<keyword id="KW-0963">Cytoplasm</keyword>
<keyword id="KW-0539">Nucleus</keyword>
<keyword id="KW-0597">Phosphoprotein</keyword>
<keyword id="KW-1267">Proteomics identification</keyword>
<keyword id="KW-1185">Reference proteome</keyword>
<keyword id="KW-0694">RNA-binding</keyword>
<keyword id="KW-0810">Translation regulation</keyword>
<feature type="initiator methionine" description="Removed" evidence="11">
    <location>
        <position position="1"/>
    </location>
</feature>
<feature type="chain" id="PRO_0000281141" description="La-related protein 6">
    <location>
        <begin position="2"/>
        <end position="491"/>
    </location>
</feature>
<feature type="domain" description="HTH La-type RNA-binding" evidence="2">
    <location>
        <begin position="86"/>
        <end position="177"/>
    </location>
</feature>
<feature type="domain" description="RRM">
    <location>
        <begin position="184"/>
        <end position="296"/>
    </location>
</feature>
<feature type="domain" description="SUZ-C" evidence="3">
    <location>
        <begin position="427"/>
        <end position="485"/>
    </location>
</feature>
<feature type="region of interest" description="Disordered" evidence="4">
    <location>
        <begin position="1"/>
        <end position="87"/>
    </location>
</feature>
<feature type="region of interest" description="Disordered" evidence="4">
    <location>
        <begin position="293"/>
        <end position="403"/>
    </location>
</feature>
<feature type="region of interest" description="Disordered" evidence="4">
    <location>
        <begin position="423"/>
        <end position="491"/>
    </location>
</feature>
<feature type="short sequence motif" description="Nuclear export signal">
    <location>
        <begin position="186"/>
        <end position="193"/>
    </location>
</feature>
<feature type="short sequence motif" description="Nuclear localization signal">
    <location>
        <begin position="296"/>
        <end position="302"/>
    </location>
</feature>
<feature type="compositionally biased region" description="Acidic residues" evidence="4">
    <location>
        <begin position="24"/>
        <end position="37"/>
    </location>
</feature>
<feature type="compositionally biased region" description="Low complexity" evidence="4">
    <location>
        <begin position="332"/>
        <end position="346"/>
    </location>
</feature>
<feature type="compositionally biased region" description="Polar residues" evidence="4">
    <location>
        <begin position="359"/>
        <end position="386"/>
    </location>
</feature>
<feature type="compositionally biased region" description="Polar residues" evidence="4">
    <location>
        <begin position="444"/>
        <end position="453"/>
    </location>
</feature>
<feature type="compositionally biased region" description="Basic and acidic residues" evidence="4">
    <location>
        <begin position="482"/>
        <end position="491"/>
    </location>
</feature>
<feature type="modified residue" description="N-acetylalanine" evidence="11">
    <location>
        <position position="2"/>
    </location>
</feature>
<feature type="modified residue" description="Phosphoserine" evidence="12">
    <location>
        <position position="56"/>
    </location>
</feature>
<feature type="modified residue" description="Phosphoserine" evidence="1">
    <location>
        <position position="58"/>
    </location>
</feature>
<feature type="splice variant" id="VSP_042565" description="In isoform 2." evidence="9">
    <original>SGTTASGGENEREDLEQEWKPPDEELIKKLVDQIEFYFSDENLEKDAFLLKHVRRNKLGYVSVKLLTSFKKVKHLTRDWRTTAHALKYSVVLELNEDHRKVRRTTPVPLFPNENLPSKMLLVYDLYLSPKLWALATPQKNGRVQEKVMEHLLKLFGTFGVISSVRILKPGRELPPDIRRISSRYSQVGTQECAIVEFEEVEAAIKAHEFMITESQGKENMKAVLIGMKPPKKKPAKDKNHDEEPTASIHLNKSLNKRVEELQYMGDESSANSSSDPESNPTSPMAGRRHAATNKLSPSGHQNLFLSPNASPCTSPWSSPLAQRKGVSRKSPLAEEGRLNCSTSPEIFRKCMDYSSDSSVTPSGSPWVRRRRQAEMGTQEKSPGTSPLLSRKMQTADGLPVGVLRLPRGPDNTRGFHGHERSRACV</original>
    <variation>RNRSSVNSRTMLASFIVSSAPSTAPST</variation>
    <location>
        <begin position="67"/>
        <end position="491"/>
    </location>
</feature>
<feature type="sequence conflict" description="In Ref. 2; BAA92061." evidence="10" ref="2">
    <original>Y</original>
    <variation>C</variation>
    <location>
        <position position="103"/>
    </location>
</feature>
<feature type="strand" evidence="13">
    <location>
        <begin position="78"/>
        <end position="80"/>
    </location>
</feature>
<feature type="helix" evidence="13">
    <location>
        <begin position="90"/>
        <end position="103"/>
    </location>
</feature>
<feature type="helix" evidence="13">
    <location>
        <begin position="106"/>
        <end position="109"/>
    </location>
</feature>
<feature type="turn" evidence="13">
    <location>
        <begin position="113"/>
        <end position="115"/>
    </location>
</feature>
<feature type="helix" evidence="13">
    <location>
        <begin position="116"/>
        <end position="119"/>
    </location>
</feature>
<feature type="strand" evidence="13">
    <location>
        <begin position="122"/>
        <end position="124"/>
    </location>
</feature>
<feature type="helix" evidence="13">
    <location>
        <begin position="129"/>
        <end position="133"/>
    </location>
</feature>
<feature type="turn" evidence="13">
    <location>
        <begin position="136"/>
        <end position="140"/>
    </location>
</feature>
<feature type="helix" evidence="13">
    <location>
        <begin position="145"/>
        <end position="153"/>
    </location>
</feature>
<feature type="strand" evidence="13">
    <location>
        <begin position="157"/>
        <end position="159"/>
    </location>
</feature>
<feature type="turn" evidence="13">
    <location>
        <begin position="162"/>
        <end position="165"/>
    </location>
</feature>
<feature type="turn" evidence="13">
    <location>
        <begin position="177"/>
        <end position="179"/>
    </location>
</feature>
<feature type="strand" evidence="14">
    <location>
        <begin position="185"/>
        <end position="189"/>
    </location>
</feature>
<feature type="turn" evidence="14">
    <location>
        <begin position="195"/>
        <end position="199"/>
    </location>
</feature>
<feature type="helix" evidence="14">
    <location>
        <begin position="209"/>
        <end position="224"/>
    </location>
</feature>
<feature type="strand" evidence="14">
    <location>
        <begin position="227"/>
        <end position="233"/>
    </location>
</feature>
<feature type="turn" evidence="14">
    <location>
        <begin position="235"/>
        <end position="237"/>
    </location>
</feature>
<feature type="helix" evidence="14">
    <location>
        <begin position="241"/>
        <end position="246"/>
    </location>
</feature>
<feature type="turn" evidence="14">
    <location>
        <begin position="247"/>
        <end position="249"/>
    </location>
</feature>
<feature type="strand" evidence="14">
    <location>
        <begin position="253"/>
        <end position="255"/>
    </location>
</feature>
<feature type="strand" evidence="14">
    <location>
        <begin position="258"/>
        <end position="264"/>
    </location>
</feature>
<feature type="helix" evidence="14">
    <location>
        <begin position="266"/>
        <end position="279"/>
    </location>
</feature>
<feature type="turn" evidence="14">
    <location>
        <begin position="280"/>
        <end position="284"/>
    </location>
</feature>
<feature type="strand" evidence="14">
    <location>
        <begin position="287"/>
        <end position="291"/>
    </location>
</feature>
<comment type="function">
    <text evidence="6 7 8">Regulates the coordinated translation of type I collagen alpha-1 and alpha-2 mRNAs, CO1A1 and CO1A2. Stabilizes mRNAs through high-affinity binding of a stem-loop structure in their 5' UTR. This regulation requires VIM and MYH10 filaments, and the helicase DHX9.</text>
</comment>
<comment type="subunit">
    <text evidence="6 7 8">Interacts (via the HTH domain) with VIM/vimentin. Interacts (via C-terminus) with non-muscle myosin MYH10. Interacts (via C-terminus) with DHX9.</text>
</comment>
<comment type="subcellular location">
    <subcellularLocation>
        <location evidence="5">Cytoplasm</location>
    </subcellularLocation>
    <subcellularLocation>
        <location evidence="5">Nucleus</location>
    </subcellularLocation>
    <text>Shuttles between the nucleus and the cytoplasm.</text>
</comment>
<comment type="alternative products">
    <event type="alternative splicing"/>
    <isoform>
        <id>Q9BRS8-1</id>
        <name>1</name>
        <sequence type="displayed"/>
    </isoform>
    <isoform>
        <id>Q9BRS8-2</id>
        <name>2</name>
        <sequence type="described" ref="VSP_042565"/>
    </isoform>
</comment>
<comment type="tissue specificity">
    <text evidence="5">Expressed in numerous tissues.</text>
</comment>
<comment type="domain">
    <text>The RRM domain mediates the association with collagen mRNAs stem-loops.</text>
</comment>
<organism>
    <name type="scientific">Homo sapiens</name>
    <name type="common">Human</name>
    <dbReference type="NCBI Taxonomy" id="9606"/>
    <lineage>
        <taxon>Eukaryota</taxon>
        <taxon>Metazoa</taxon>
        <taxon>Chordata</taxon>
        <taxon>Craniata</taxon>
        <taxon>Vertebrata</taxon>
        <taxon>Euteleostomi</taxon>
        <taxon>Mammalia</taxon>
        <taxon>Eutheria</taxon>
        <taxon>Euarchontoglires</taxon>
        <taxon>Primates</taxon>
        <taxon>Haplorrhini</taxon>
        <taxon>Catarrhini</taxon>
        <taxon>Hominidae</taxon>
        <taxon>Homo</taxon>
    </lineage>
</organism>
<dbReference type="EMBL" id="AF443828">
    <property type="protein sequence ID" value="AAN76710.1"/>
    <property type="molecule type" value="mRNA"/>
</dbReference>
<dbReference type="EMBL" id="AF443829">
    <property type="protein sequence ID" value="AAN76711.1"/>
    <property type="molecule type" value="mRNA"/>
</dbReference>
<dbReference type="EMBL" id="AK002058">
    <property type="protein sequence ID" value="BAA92061.1"/>
    <property type="molecule type" value="mRNA"/>
</dbReference>
<dbReference type="EMBL" id="AL833876">
    <property type="protein sequence ID" value="CAD38733.2"/>
    <property type="molecule type" value="mRNA"/>
</dbReference>
<dbReference type="EMBL" id="AC009269">
    <property type="status" value="NOT_ANNOTATED_CDS"/>
    <property type="molecule type" value="Genomic_DNA"/>
</dbReference>
<dbReference type="EMBL" id="AC090868">
    <property type="status" value="NOT_ANNOTATED_CDS"/>
    <property type="molecule type" value="Genomic_DNA"/>
</dbReference>
<dbReference type="EMBL" id="BC006082">
    <property type="protein sequence ID" value="AAH06082.1"/>
    <property type="molecule type" value="mRNA"/>
</dbReference>
<dbReference type="EMBL" id="BC009446">
    <property type="protein sequence ID" value="AAH09446.1"/>
    <property type="molecule type" value="mRNA"/>
</dbReference>
<dbReference type="EMBL" id="BC014018">
    <property type="protein sequence ID" value="AAH14018.1"/>
    <property type="molecule type" value="mRNA"/>
</dbReference>
<dbReference type="EMBL" id="BC039153">
    <property type="protein sequence ID" value="AAH39153.1"/>
    <property type="molecule type" value="mRNA"/>
</dbReference>
<dbReference type="CCDS" id="CCDS10236.1">
    <molecule id="Q9BRS8-2"/>
</dbReference>
<dbReference type="CCDS" id="CCDS32281.1">
    <molecule id="Q9BRS8-1"/>
</dbReference>
<dbReference type="RefSeq" id="NP_001273608.1">
    <property type="nucleotide sequence ID" value="NM_001286679.1"/>
</dbReference>
<dbReference type="RefSeq" id="NP_060827.2">
    <molecule id="Q9BRS8-1"/>
    <property type="nucleotide sequence ID" value="NM_018357.3"/>
</dbReference>
<dbReference type="RefSeq" id="NP_932062.1">
    <molecule id="Q9BRS8-2"/>
    <property type="nucleotide sequence ID" value="NM_197958.3"/>
</dbReference>
<dbReference type="PDB" id="2MTF">
    <property type="method" value="NMR"/>
    <property type="chains" value="A=70-183"/>
</dbReference>
<dbReference type="PDB" id="2MTG">
    <property type="method" value="NMR"/>
    <property type="chains" value="A=178-295"/>
</dbReference>
<dbReference type="PDBsum" id="2MTF"/>
<dbReference type="PDBsum" id="2MTG"/>
<dbReference type="BMRB" id="Q9BRS8"/>
<dbReference type="SMR" id="Q9BRS8"/>
<dbReference type="BioGRID" id="120604">
    <property type="interactions" value="11"/>
</dbReference>
<dbReference type="FunCoup" id="Q9BRS8">
    <property type="interactions" value="60"/>
</dbReference>
<dbReference type="IntAct" id="Q9BRS8">
    <property type="interactions" value="2"/>
</dbReference>
<dbReference type="STRING" id="9606.ENSP00000299213"/>
<dbReference type="ChEMBL" id="CHEMBL4739702"/>
<dbReference type="GlyConnect" id="1953">
    <property type="glycosylation" value="5 N-Linked glycans (1 site)"/>
</dbReference>
<dbReference type="GlyCosmos" id="Q9BRS8">
    <property type="glycosylation" value="1 site, 5 glycans"/>
</dbReference>
<dbReference type="GlyGen" id="Q9BRS8">
    <property type="glycosylation" value="1 site, 5 N-linked glycans (1 site)"/>
</dbReference>
<dbReference type="iPTMnet" id="Q9BRS8"/>
<dbReference type="PhosphoSitePlus" id="Q9BRS8"/>
<dbReference type="BioMuta" id="LARP6"/>
<dbReference type="DMDM" id="74752287"/>
<dbReference type="jPOST" id="Q9BRS8"/>
<dbReference type="MassIVE" id="Q9BRS8"/>
<dbReference type="PaxDb" id="9606-ENSP00000299213"/>
<dbReference type="PeptideAtlas" id="Q9BRS8"/>
<dbReference type="ProteomicsDB" id="78825">
    <molecule id="Q9BRS8-1"/>
</dbReference>
<dbReference type="ProteomicsDB" id="78826">
    <molecule id="Q9BRS8-2"/>
</dbReference>
<dbReference type="Pumba" id="Q9BRS8"/>
<dbReference type="Antibodypedia" id="14073">
    <property type="antibodies" value="124 antibodies from 19 providers"/>
</dbReference>
<dbReference type="CPTC" id="Q9BRS8">
    <property type="antibodies" value="Previous GeneCards"/>
</dbReference>
<dbReference type="DNASU" id="55323"/>
<dbReference type="Ensembl" id="ENST00000299213.10">
    <molecule id="Q9BRS8-1"/>
    <property type="protein sequence ID" value="ENSP00000299213.7"/>
    <property type="gene ID" value="ENSG00000166173.11"/>
</dbReference>
<dbReference type="Ensembl" id="ENST00000344870.4">
    <molecule id="Q9BRS8-2"/>
    <property type="protein sequence ID" value="ENSP00000343869.3"/>
    <property type="gene ID" value="ENSG00000166173.11"/>
</dbReference>
<dbReference type="GeneID" id="55323"/>
<dbReference type="KEGG" id="hsa:55323"/>
<dbReference type="MANE-Select" id="ENST00000299213.10">
    <property type="protein sequence ID" value="ENSP00000299213.7"/>
    <property type="RefSeq nucleotide sequence ID" value="NM_018357.4"/>
    <property type="RefSeq protein sequence ID" value="NP_060827.2"/>
</dbReference>
<dbReference type="UCSC" id="uc002ass.5">
    <molecule id="Q9BRS8-1"/>
    <property type="organism name" value="human"/>
</dbReference>
<dbReference type="AGR" id="HGNC:24012"/>
<dbReference type="CTD" id="55323"/>
<dbReference type="DisGeNET" id="55323"/>
<dbReference type="GeneCards" id="LARP6"/>
<dbReference type="HGNC" id="HGNC:24012">
    <property type="gene designation" value="LARP6"/>
</dbReference>
<dbReference type="HPA" id="ENSG00000166173">
    <property type="expression patterns" value="Tissue enhanced (brain)"/>
</dbReference>
<dbReference type="MIM" id="611300">
    <property type="type" value="gene"/>
</dbReference>
<dbReference type="neXtProt" id="NX_Q9BRS8"/>
<dbReference type="OpenTargets" id="ENSG00000166173"/>
<dbReference type="PharmGKB" id="PA142671568"/>
<dbReference type="VEuPathDB" id="HostDB:ENSG00000166173"/>
<dbReference type="eggNOG" id="KOG1855">
    <property type="taxonomic scope" value="Eukaryota"/>
</dbReference>
<dbReference type="GeneTree" id="ENSGT00940000159103"/>
<dbReference type="HOGENOM" id="CLU_015330_1_0_1"/>
<dbReference type="InParanoid" id="Q9BRS8"/>
<dbReference type="OMA" id="WIGGLWR"/>
<dbReference type="OrthoDB" id="435402at2759"/>
<dbReference type="PAN-GO" id="Q9BRS8">
    <property type="GO annotations" value="3 GO annotations based on evolutionary models"/>
</dbReference>
<dbReference type="PhylomeDB" id="Q9BRS8"/>
<dbReference type="TreeFam" id="TF326594"/>
<dbReference type="PathwayCommons" id="Q9BRS8"/>
<dbReference type="SignaLink" id="Q9BRS8"/>
<dbReference type="SIGNOR" id="Q9BRS8"/>
<dbReference type="BioGRID-ORCS" id="55323">
    <property type="hits" value="13 hits in 1143 CRISPR screens"/>
</dbReference>
<dbReference type="ChiTaRS" id="LARP6">
    <property type="organism name" value="human"/>
</dbReference>
<dbReference type="EvolutionaryTrace" id="Q9BRS8"/>
<dbReference type="GeneWiki" id="LARP6"/>
<dbReference type="GenomeRNAi" id="55323"/>
<dbReference type="Pharos" id="Q9BRS8">
    <property type="development level" value="Tbio"/>
</dbReference>
<dbReference type="PRO" id="PR:Q9BRS8"/>
<dbReference type="Proteomes" id="UP000005640">
    <property type="component" value="Chromosome 15"/>
</dbReference>
<dbReference type="RNAct" id="Q9BRS8">
    <property type="molecule type" value="protein"/>
</dbReference>
<dbReference type="Bgee" id="ENSG00000166173">
    <property type="expression patterns" value="Expressed in lateral globus pallidus and 188 other cell types or tissues"/>
</dbReference>
<dbReference type="ExpressionAtlas" id="Q9BRS8">
    <property type="expression patterns" value="baseline and differential"/>
</dbReference>
<dbReference type="GO" id="GO:0005737">
    <property type="term" value="C:cytoplasm"/>
    <property type="evidence" value="ECO:0000314"/>
    <property type="project" value="UniProtKB"/>
</dbReference>
<dbReference type="GO" id="GO:0005634">
    <property type="term" value="C:nucleus"/>
    <property type="evidence" value="ECO:0000314"/>
    <property type="project" value="UniProtKB"/>
</dbReference>
<dbReference type="GO" id="GO:1990904">
    <property type="term" value="C:ribonucleoprotein complex"/>
    <property type="evidence" value="ECO:0007669"/>
    <property type="project" value="InterPro"/>
</dbReference>
<dbReference type="GO" id="GO:0048027">
    <property type="term" value="F:mRNA 5'-UTR binding"/>
    <property type="evidence" value="ECO:0000314"/>
    <property type="project" value="UniProtKB"/>
</dbReference>
<dbReference type="GO" id="GO:0003729">
    <property type="term" value="F:mRNA binding"/>
    <property type="evidence" value="ECO:0000318"/>
    <property type="project" value="GO_Central"/>
</dbReference>
<dbReference type="GO" id="GO:0017022">
    <property type="term" value="F:myosin binding"/>
    <property type="evidence" value="ECO:0000353"/>
    <property type="project" value="UniProtKB"/>
</dbReference>
<dbReference type="GO" id="GO:0035613">
    <property type="term" value="F:RNA stem-loop binding"/>
    <property type="evidence" value="ECO:0000314"/>
    <property type="project" value="UniProtKB"/>
</dbReference>
<dbReference type="GO" id="GO:1990825">
    <property type="term" value="F:sequence-specific mRNA binding"/>
    <property type="evidence" value="ECO:0000314"/>
    <property type="project" value="UniProtKB"/>
</dbReference>
<dbReference type="GO" id="GO:0032967">
    <property type="term" value="P:positive regulation of collagen biosynthetic process"/>
    <property type="evidence" value="ECO:0000315"/>
    <property type="project" value="UniProtKB"/>
</dbReference>
<dbReference type="GO" id="GO:0006417">
    <property type="term" value="P:regulation of translation"/>
    <property type="evidence" value="ECO:0007669"/>
    <property type="project" value="UniProtKB-KW"/>
</dbReference>
<dbReference type="GO" id="GO:0006396">
    <property type="term" value="P:RNA processing"/>
    <property type="evidence" value="ECO:0007669"/>
    <property type="project" value="InterPro"/>
</dbReference>
<dbReference type="CDD" id="cd08033">
    <property type="entry name" value="LARP_6"/>
    <property type="match status" value="1"/>
</dbReference>
<dbReference type="CDD" id="cd12289">
    <property type="entry name" value="RRM_LARP6"/>
    <property type="match status" value="1"/>
</dbReference>
<dbReference type="FunFam" id="1.10.10.10:FF:000158">
    <property type="entry name" value="La ribonucleoprotein domain family member 7"/>
    <property type="match status" value="1"/>
</dbReference>
<dbReference type="FunFam" id="3.30.70.330:FF:000439">
    <property type="entry name" value="La-related protein 6 isoform 1"/>
    <property type="match status" value="1"/>
</dbReference>
<dbReference type="Gene3D" id="3.30.70.330">
    <property type="match status" value="1"/>
</dbReference>
<dbReference type="Gene3D" id="1.10.10.10">
    <property type="entry name" value="Winged helix-like DNA-binding domain superfamily/Winged helix DNA-binding domain"/>
    <property type="match status" value="1"/>
</dbReference>
<dbReference type="InterPro" id="IPR045180">
    <property type="entry name" value="La_dom_prot"/>
</dbReference>
<dbReference type="InterPro" id="IPR006630">
    <property type="entry name" value="La_HTH"/>
</dbReference>
<dbReference type="InterPro" id="IPR034880">
    <property type="entry name" value="LARP6_RRM"/>
</dbReference>
<dbReference type="InterPro" id="IPR002344">
    <property type="entry name" value="Lupus_La"/>
</dbReference>
<dbReference type="InterPro" id="IPR012677">
    <property type="entry name" value="Nucleotide-bd_a/b_plait_sf"/>
</dbReference>
<dbReference type="InterPro" id="IPR035979">
    <property type="entry name" value="RBD_domain_sf"/>
</dbReference>
<dbReference type="InterPro" id="IPR024642">
    <property type="entry name" value="SUZ-C"/>
</dbReference>
<dbReference type="InterPro" id="IPR036388">
    <property type="entry name" value="WH-like_DNA-bd_sf"/>
</dbReference>
<dbReference type="InterPro" id="IPR036390">
    <property type="entry name" value="WH_DNA-bd_sf"/>
</dbReference>
<dbReference type="PANTHER" id="PTHR22792:SF71">
    <property type="entry name" value="LA-RELATED PROTEIN 6"/>
    <property type="match status" value="1"/>
</dbReference>
<dbReference type="PANTHER" id="PTHR22792">
    <property type="entry name" value="LUPUS LA PROTEIN-RELATED"/>
    <property type="match status" value="1"/>
</dbReference>
<dbReference type="Pfam" id="PF05383">
    <property type="entry name" value="La"/>
    <property type="match status" value="1"/>
</dbReference>
<dbReference type="Pfam" id="PF12901">
    <property type="entry name" value="SUZ-C"/>
    <property type="match status" value="1"/>
</dbReference>
<dbReference type="PRINTS" id="PR00302">
    <property type="entry name" value="LUPUSLA"/>
</dbReference>
<dbReference type="SMART" id="SM00715">
    <property type="entry name" value="LA"/>
    <property type="match status" value="1"/>
</dbReference>
<dbReference type="SUPFAM" id="SSF54928">
    <property type="entry name" value="RNA-binding domain, RBD"/>
    <property type="match status" value="1"/>
</dbReference>
<dbReference type="SUPFAM" id="SSF46785">
    <property type="entry name" value="Winged helix' DNA-binding domain"/>
    <property type="match status" value="1"/>
</dbReference>
<dbReference type="PROSITE" id="PS50961">
    <property type="entry name" value="HTH_LA"/>
    <property type="match status" value="1"/>
</dbReference>
<dbReference type="PROSITE" id="PS51938">
    <property type="entry name" value="SUZ_C"/>
    <property type="match status" value="1"/>
</dbReference>
<evidence type="ECO:0000250" key="1">
    <source>
        <dbReference type="UniProtKB" id="Q8BN59"/>
    </source>
</evidence>
<evidence type="ECO:0000255" key="2">
    <source>
        <dbReference type="PROSITE-ProRule" id="PRU00332"/>
    </source>
</evidence>
<evidence type="ECO:0000255" key="3">
    <source>
        <dbReference type="PROSITE-ProRule" id="PRU01287"/>
    </source>
</evidence>
<evidence type="ECO:0000256" key="4">
    <source>
        <dbReference type="SAM" id="MobiDB-lite"/>
    </source>
</evidence>
<evidence type="ECO:0000269" key="5">
    <source>
    </source>
</evidence>
<evidence type="ECO:0000269" key="6">
    <source>
    </source>
</evidence>
<evidence type="ECO:0000269" key="7">
    <source>
    </source>
</evidence>
<evidence type="ECO:0000269" key="8">
    <source>
    </source>
</evidence>
<evidence type="ECO:0000303" key="9">
    <source>
    </source>
</evidence>
<evidence type="ECO:0000305" key="10"/>
<evidence type="ECO:0007744" key="11">
    <source>
    </source>
</evidence>
<evidence type="ECO:0007744" key="12">
    <source>
    </source>
</evidence>
<evidence type="ECO:0007829" key="13">
    <source>
        <dbReference type="PDB" id="2MTF"/>
    </source>
</evidence>
<evidence type="ECO:0007829" key="14">
    <source>
        <dbReference type="PDB" id="2MTG"/>
    </source>
</evidence>
<proteinExistence type="evidence at protein level"/>
<accession>Q9BRS8</accession>
<accession>Q5XKE4</accession>
<accession>Q8N3N2</accession>
<accession>Q9NUR0</accession>
<gene>
    <name type="primary">LARP6</name>
</gene>
<protein>
    <recommendedName>
        <fullName>La-related protein 6</fullName>
    </recommendedName>
    <alternativeName>
        <fullName>Acheron</fullName>
        <shortName>Achn</shortName>
    </alternativeName>
    <alternativeName>
        <fullName>La ribonucleoprotein domain family member 6</fullName>
    </alternativeName>
</protein>